<evidence type="ECO:0000255" key="1">
    <source>
        <dbReference type="HAMAP-Rule" id="MF_01006"/>
    </source>
</evidence>
<comment type="function">
    <text evidence="1">Catalyzes the dephosphorylation of undecaprenyl diphosphate (UPP). Confers resistance to bacitracin.</text>
</comment>
<comment type="catalytic activity">
    <reaction evidence="1">
        <text>di-trans,octa-cis-undecaprenyl diphosphate + H2O = di-trans,octa-cis-undecaprenyl phosphate + phosphate + H(+)</text>
        <dbReference type="Rhea" id="RHEA:28094"/>
        <dbReference type="ChEBI" id="CHEBI:15377"/>
        <dbReference type="ChEBI" id="CHEBI:15378"/>
        <dbReference type="ChEBI" id="CHEBI:43474"/>
        <dbReference type="ChEBI" id="CHEBI:58405"/>
        <dbReference type="ChEBI" id="CHEBI:60392"/>
        <dbReference type="EC" id="3.6.1.27"/>
    </reaction>
</comment>
<comment type="subcellular location">
    <subcellularLocation>
        <location evidence="1">Cell inner membrane</location>
        <topology evidence="1">Multi-pass membrane protein</topology>
    </subcellularLocation>
</comment>
<comment type="miscellaneous">
    <text>Bacitracin is thought to be involved in the inhibition of peptidoglycan synthesis by sequestering undecaprenyl diphosphate, thereby reducing the pool of lipid carrier available.</text>
</comment>
<comment type="similarity">
    <text evidence="1">Belongs to the UppP family.</text>
</comment>
<feature type="chain" id="PRO_1000197405" description="Undecaprenyl-diphosphatase">
    <location>
        <begin position="1"/>
        <end position="266"/>
    </location>
</feature>
<feature type="transmembrane region" description="Helical" evidence="1">
    <location>
        <begin position="1"/>
        <end position="21"/>
    </location>
</feature>
<feature type="transmembrane region" description="Helical" evidence="1">
    <location>
        <begin position="39"/>
        <end position="59"/>
    </location>
</feature>
<feature type="transmembrane region" description="Helical" evidence="1">
    <location>
        <begin position="83"/>
        <end position="103"/>
    </location>
</feature>
<feature type="transmembrane region" description="Helical" evidence="1">
    <location>
        <begin position="111"/>
        <end position="131"/>
    </location>
</feature>
<feature type="transmembrane region" description="Helical" evidence="1">
    <location>
        <begin position="144"/>
        <end position="164"/>
    </location>
</feature>
<feature type="transmembrane region" description="Helical" evidence="1">
    <location>
        <begin position="183"/>
        <end position="203"/>
    </location>
</feature>
<feature type="transmembrane region" description="Helical" evidence="1">
    <location>
        <begin position="218"/>
        <end position="238"/>
    </location>
</feature>
<feature type="transmembrane region" description="Helical" evidence="1">
    <location>
        <begin position="246"/>
        <end position="266"/>
    </location>
</feature>
<protein>
    <recommendedName>
        <fullName evidence="1">Undecaprenyl-diphosphatase</fullName>
        <ecNumber evidence="1">3.6.1.27</ecNumber>
    </recommendedName>
    <alternativeName>
        <fullName evidence="1">Bacitracin resistance protein</fullName>
    </alternativeName>
    <alternativeName>
        <fullName evidence="1">Undecaprenyl pyrophosphate phosphatase</fullName>
    </alternativeName>
</protein>
<dbReference type="EC" id="3.6.1.27" evidence="1"/>
<dbReference type="EMBL" id="CP000961">
    <property type="protein sequence ID" value="ACA85454.1"/>
    <property type="molecule type" value="Genomic_DNA"/>
</dbReference>
<dbReference type="RefSeq" id="WP_012323800.1">
    <property type="nucleotide sequence ID" value="NC_010506.1"/>
</dbReference>
<dbReference type="SMR" id="B1KHE6"/>
<dbReference type="STRING" id="392500.Swoo_1161"/>
<dbReference type="KEGG" id="swd:Swoo_1161"/>
<dbReference type="eggNOG" id="COG1968">
    <property type="taxonomic scope" value="Bacteria"/>
</dbReference>
<dbReference type="HOGENOM" id="CLU_060296_1_0_6"/>
<dbReference type="Proteomes" id="UP000002168">
    <property type="component" value="Chromosome"/>
</dbReference>
<dbReference type="GO" id="GO:0005886">
    <property type="term" value="C:plasma membrane"/>
    <property type="evidence" value="ECO:0007669"/>
    <property type="project" value="UniProtKB-SubCell"/>
</dbReference>
<dbReference type="GO" id="GO:0050380">
    <property type="term" value="F:undecaprenyl-diphosphatase activity"/>
    <property type="evidence" value="ECO:0007669"/>
    <property type="project" value="UniProtKB-UniRule"/>
</dbReference>
<dbReference type="GO" id="GO:0071555">
    <property type="term" value="P:cell wall organization"/>
    <property type="evidence" value="ECO:0007669"/>
    <property type="project" value="UniProtKB-KW"/>
</dbReference>
<dbReference type="GO" id="GO:0009252">
    <property type="term" value="P:peptidoglycan biosynthetic process"/>
    <property type="evidence" value="ECO:0007669"/>
    <property type="project" value="UniProtKB-KW"/>
</dbReference>
<dbReference type="GO" id="GO:0008360">
    <property type="term" value="P:regulation of cell shape"/>
    <property type="evidence" value="ECO:0007669"/>
    <property type="project" value="UniProtKB-KW"/>
</dbReference>
<dbReference type="GO" id="GO:0046677">
    <property type="term" value="P:response to antibiotic"/>
    <property type="evidence" value="ECO:0007669"/>
    <property type="project" value="UniProtKB-UniRule"/>
</dbReference>
<dbReference type="HAMAP" id="MF_01006">
    <property type="entry name" value="Undec_diphosphatase"/>
    <property type="match status" value="1"/>
</dbReference>
<dbReference type="InterPro" id="IPR003824">
    <property type="entry name" value="UppP"/>
</dbReference>
<dbReference type="NCBIfam" id="NF001393">
    <property type="entry name" value="PRK00281.2-4"/>
    <property type="match status" value="1"/>
</dbReference>
<dbReference type="NCBIfam" id="TIGR00753">
    <property type="entry name" value="undec_PP_bacA"/>
    <property type="match status" value="1"/>
</dbReference>
<dbReference type="PANTHER" id="PTHR30622">
    <property type="entry name" value="UNDECAPRENYL-DIPHOSPHATASE"/>
    <property type="match status" value="1"/>
</dbReference>
<dbReference type="PANTHER" id="PTHR30622:SF4">
    <property type="entry name" value="UNDECAPRENYL-DIPHOSPHATASE"/>
    <property type="match status" value="1"/>
</dbReference>
<dbReference type="Pfam" id="PF02673">
    <property type="entry name" value="BacA"/>
    <property type="match status" value="1"/>
</dbReference>
<name>UPPP_SHEWM</name>
<sequence length="266" mass="29036">MDTFQVIILALIQGLTEFLPISSSAHLILPSQILGWEDQGLAFDVAVHIGSLLAVVLYFRKEVVSLLTSWLASIFKGQKSDDSKLAWWIILATLPAVILGFALKDMIEVYLRGPGVIAITTVLFGLLLWWADRMSRCELTEYQTGWKKALLIGFAQALALIPGTSRSGATITAALMLGLNREAAARFSFLMSIPVILGAAILMSKDLFESGHVIDYSSLALGVGVSFVAAYTCIHLFLKIISRMGMTPFVIYRLALGALLCAFIFM</sequence>
<accession>B1KHE6</accession>
<organism>
    <name type="scientific">Shewanella woodyi (strain ATCC 51908 / MS32)</name>
    <dbReference type="NCBI Taxonomy" id="392500"/>
    <lineage>
        <taxon>Bacteria</taxon>
        <taxon>Pseudomonadati</taxon>
        <taxon>Pseudomonadota</taxon>
        <taxon>Gammaproteobacteria</taxon>
        <taxon>Alteromonadales</taxon>
        <taxon>Shewanellaceae</taxon>
        <taxon>Shewanella</taxon>
    </lineage>
</organism>
<proteinExistence type="inferred from homology"/>
<reference key="1">
    <citation type="submission" date="2008-02" db="EMBL/GenBank/DDBJ databases">
        <title>Complete sequence of Shewanella woodyi ATCC 51908.</title>
        <authorList>
            <consortium name="US DOE Joint Genome Institute"/>
            <person name="Copeland A."/>
            <person name="Lucas S."/>
            <person name="Lapidus A."/>
            <person name="Glavina del Rio T."/>
            <person name="Dalin E."/>
            <person name="Tice H."/>
            <person name="Bruce D."/>
            <person name="Goodwin L."/>
            <person name="Pitluck S."/>
            <person name="Sims D."/>
            <person name="Brettin T."/>
            <person name="Detter J.C."/>
            <person name="Han C."/>
            <person name="Kuske C.R."/>
            <person name="Schmutz J."/>
            <person name="Larimer F."/>
            <person name="Land M."/>
            <person name="Hauser L."/>
            <person name="Kyrpides N."/>
            <person name="Lykidis A."/>
            <person name="Zhao J.-S."/>
            <person name="Richardson P."/>
        </authorList>
    </citation>
    <scope>NUCLEOTIDE SEQUENCE [LARGE SCALE GENOMIC DNA]</scope>
    <source>
        <strain>ATCC 51908 / MS32</strain>
    </source>
</reference>
<gene>
    <name evidence="1" type="primary">uppP</name>
    <name type="ordered locus">Swoo_1161</name>
</gene>
<keyword id="KW-0046">Antibiotic resistance</keyword>
<keyword id="KW-0997">Cell inner membrane</keyword>
<keyword id="KW-1003">Cell membrane</keyword>
<keyword id="KW-0133">Cell shape</keyword>
<keyword id="KW-0961">Cell wall biogenesis/degradation</keyword>
<keyword id="KW-0378">Hydrolase</keyword>
<keyword id="KW-0472">Membrane</keyword>
<keyword id="KW-0573">Peptidoglycan synthesis</keyword>
<keyword id="KW-1185">Reference proteome</keyword>
<keyword id="KW-0812">Transmembrane</keyword>
<keyword id="KW-1133">Transmembrane helix</keyword>